<comment type="function">
    <text evidence="3">Component of the class 1 Sin3A-histone deacetylase (HDAC1/Rpd3) complex (HDAC). Appears to be a non-essential subunit of this complex which is not required for cell cycle regulation of progression through the G2 phase of the cell cycle.</text>
</comment>
<comment type="subunit">
    <text evidence="3">Component of the class 1 Sin3A-histone deacetylase (HDAC1/Rpd3) complex (HDAC). Not essential for stability of the complex, recruitment of the complex to some promoters, or the deacetylase activity of the complex.</text>
</comment>
<comment type="subcellular location">
    <subcellularLocation>
        <location evidence="1">Nucleus</location>
    </subcellularLocation>
</comment>
<comment type="disruption phenotype">
    <text evidence="3">Does not cause cell morphology changes, cell growth defects, cell cycle phenotypes, or loss of Smr/SMRTER protein from the Sin3A-histone deacetylase (HDAC1/Rpd3) complex.</text>
</comment>
<comment type="similarity">
    <text evidence="5">Belongs to the SAP30 family.</text>
</comment>
<proteinExistence type="evidence at protein level"/>
<organism>
    <name type="scientific">Drosophila melanogaster</name>
    <name type="common">Fruit fly</name>
    <dbReference type="NCBI Taxonomy" id="7227"/>
    <lineage>
        <taxon>Eukaryota</taxon>
        <taxon>Metazoa</taxon>
        <taxon>Ecdysozoa</taxon>
        <taxon>Arthropoda</taxon>
        <taxon>Hexapoda</taxon>
        <taxon>Insecta</taxon>
        <taxon>Pterygota</taxon>
        <taxon>Neoptera</taxon>
        <taxon>Endopterygota</taxon>
        <taxon>Diptera</taxon>
        <taxon>Brachycera</taxon>
        <taxon>Muscomorpha</taxon>
        <taxon>Ephydroidea</taxon>
        <taxon>Drosophilidae</taxon>
        <taxon>Drosophila</taxon>
        <taxon>Sophophora</taxon>
    </lineage>
</organism>
<gene>
    <name type="primary">Sap30</name>
    <name type="ORF">CG4756</name>
</gene>
<sequence length="173" mass="20192">MNNGFSTGEEDSRGHTDQTCCLIDDMERCRNQAGYASYSKRIQKTVAQKRLKLSSDPAAQHIYICDHHKERIQSVRTKRRRKDSEDDSNETDTDLHEFPDLYQLGVSTLRRYKRHFKVQTRQGMKRAQLADTIMKHFKTIPIKEKEIITFFVYMVKMGSNKLDQKNGLGNDTT</sequence>
<protein>
    <recommendedName>
        <fullName>Histone deacetylase complex subunit SAP30 homolog</fullName>
    </recommendedName>
    <alternativeName>
        <fullName>SIN3-associated polypeptide 30</fullName>
    </alternativeName>
</protein>
<accession>Q9VXB3</accession>
<dbReference type="EMBL" id="AE014298">
    <property type="protein sequence ID" value="AAF48664.1"/>
    <property type="molecule type" value="Genomic_DNA"/>
</dbReference>
<dbReference type="EMBL" id="AY071452">
    <property type="protein sequence ID" value="AAL49074.1"/>
    <property type="molecule type" value="mRNA"/>
</dbReference>
<dbReference type="RefSeq" id="NP_001285352.1">
    <property type="nucleotide sequence ID" value="NM_001298423.1"/>
</dbReference>
<dbReference type="RefSeq" id="NP_573162.1">
    <property type="nucleotide sequence ID" value="NM_132934.4"/>
</dbReference>
<dbReference type="SMR" id="Q9VXB3"/>
<dbReference type="BioGRID" id="58997">
    <property type="interactions" value="6"/>
</dbReference>
<dbReference type="FunCoup" id="Q9VXB3">
    <property type="interactions" value="761"/>
</dbReference>
<dbReference type="IntAct" id="Q9VXB3">
    <property type="interactions" value="2"/>
</dbReference>
<dbReference type="STRING" id="7227.FBpp0310514"/>
<dbReference type="iPTMnet" id="Q9VXB3"/>
<dbReference type="PaxDb" id="7227-FBpp0074105"/>
<dbReference type="DNASU" id="32664"/>
<dbReference type="EnsemblMetazoa" id="FBtr0074331">
    <property type="protein sequence ID" value="FBpp0074105"/>
    <property type="gene ID" value="FBgn0030788"/>
</dbReference>
<dbReference type="EnsemblMetazoa" id="FBtr0344089">
    <property type="protein sequence ID" value="FBpp0310514"/>
    <property type="gene ID" value="FBgn0030788"/>
</dbReference>
<dbReference type="GeneID" id="32664"/>
<dbReference type="KEGG" id="dme:Dmel_CG4756"/>
<dbReference type="UCSC" id="CG4756-RA">
    <property type="organism name" value="d. melanogaster"/>
</dbReference>
<dbReference type="AGR" id="FB:FBgn0030788"/>
<dbReference type="CTD" id="8819"/>
<dbReference type="FlyBase" id="FBgn0030788">
    <property type="gene designation" value="Sap30"/>
</dbReference>
<dbReference type="VEuPathDB" id="VectorBase:FBgn0030788"/>
<dbReference type="eggNOG" id="ENOG502QWFH">
    <property type="taxonomic scope" value="Eukaryota"/>
</dbReference>
<dbReference type="HOGENOM" id="CLU_097961_1_0_1"/>
<dbReference type="InParanoid" id="Q9VXB3"/>
<dbReference type="OMA" id="SDQICCL"/>
<dbReference type="OrthoDB" id="510958at2759"/>
<dbReference type="PhylomeDB" id="Q9VXB3"/>
<dbReference type="Reactome" id="R-DME-3214815">
    <property type="pathway name" value="HDACs deacetylate histones"/>
</dbReference>
<dbReference type="BioGRID-ORCS" id="32664">
    <property type="hits" value="0 hits in 3 CRISPR screens"/>
</dbReference>
<dbReference type="ChiTaRS" id="Sap30">
    <property type="organism name" value="fly"/>
</dbReference>
<dbReference type="GenomeRNAi" id="32664"/>
<dbReference type="PRO" id="PR:Q9VXB3"/>
<dbReference type="Proteomes" id="UP000000803">
    <property type="component" value="Chromosome X"/>
</dbReference>
<dbReference type="Bgee" id="FBgn0030788">
    <property type="expression patterns" value="Expressed in cleaving embryo and 131 other cell types or tissues"/>
</dbReference>
<dbReference type="ExpressionAtlas" id="Q9VXB3">
    <property type="expression patterns" value="baseline and differential"/>
</dbReference>
<dbReference type="GO" id="GO:0000118">
    <property type="term" value="C:histone deacetylase complex"/>
    <property type="evidence" value="ECO:0000250"/>
    <property type="project" value="UniProtKB"/>
</dbReference>
<dbReference type="GO" id="GO:0003677">
    <property type="term" value="F:DNA binding"/>
    <property type="evidence" value="ECO:0007669"/>
    <property type="project" value="UniProtKB-KW"/>
</dbReference>
<dbReference type="GO" id="GO:0003712">
    <property type="term" value="F:transcription coregulator activity"/>
    <property type="evidence" value="ECO:0000318"/>
    <property type="project" value="GO_Central"/>
</dbReference>
<dbReference type="GO" id="GO:0008270">
    <property type="term" value="F:zinc ion binding"/>
    <property type="evidence" value="ECO:0007669"/>
    <property type="project" value="UniProtKB-KW"/>
</dbReference>
<dbReference type="GO" id="GO:0006355">
    <property type="term" value="P:regulation of DNA-templated transcription"/>
    <property type="evidence" value="ECO:0000318"/>
    <property type="project" value="GO_Central"/>
</dbReference>
<dbReference type="GO" id="GO:0010389">
    <property type="term" value="P:regulation of G2/M transition of mitotic cell cycle"/>
    <property type="evidence" value="ECO:0000315"/>
    <property type="project" value="UniProtKB"/>
</dbReference>
<dbReference type="FunFam" id="3.40.1800.30:FF:000001">
    <property type="entry name" value="Histone deacetylase complex subunit"/>
    <property type="match status" value="1"/>
</dbReference>
<dbReference type="Gene3D" id="3.40.1800.30">
    <property type="match status" value="1"/>
</dbReference>
<dbReference type="Gene3D" id="6.10.160.20">
    <property type="match status" value="1"/>
</dbReference>
<dbReference type="InterPro" id="IPR024145">
    <property type="entry name" value="His_deAcase_SAP30/SAP30L"/>
</dbReference>
<dbReference type="InterPro" id="IPR038291">
    <property type="entry name" value="SAP30_C_sf"/>
</dbReference>
<dbReference type="InterPro" id="IPR025718">
    <property type="entry name" value="SAP30_Sin3-bd"/>
</dbReference>
<dbReference type="InterPro" id="IPR025717">
    <property type="entry name" value="SAP30_zn-finger"/>
</dbReference>
<dbReference type="PANTHER" id="PTHR13286:SF6">
    <property type="entry name" value="HISTONE DEACETYLASE COMPLEX SUBUNIT SAP30L-RELATED"/>
    <property type="match status" value="1"/>
</dbReference>
<dbReference type="PANTHER" id="PTHR13286">
    <property type="entry name" value="SAP30"/>
    <property type="match status" value="1"/>
</dbReference>
<dbReference type="Pfam" id="PF13867">
    <property type="entry name" value="SAP30_Sin3_bdg"/>
    <property type="match status" value="1"/>
</dbReference>
<dbReference type="Pfam" id="PF13866">
    <property type="entry name" value="zf-SAP30"/>
    <property type="match status" value="1"/>
</dbReference>
<evidence type="ECO:0000250" key="1"/>
<evidence type="ECO:0000256" key="2">
    <source>
        <dbReference type="SAM" id="MobiDB-lite"/>
    </source>
</evidence>
<evidence type="ECO:0000269" key="3">
    <source>
    </source>
</evidence>
<evidence type="ECO:0000269" key="4">
    <source>
    </source>
</evidence>
<evidence type="ECO:0000305" key="5"/>
<reference key="1">
    <citation type="journal article" date="2000" name="Science">
        <title>The genome sequence of Drosophila melanogaster.</title>
        <authorList>
            <person name="Adams M.D."/>
            <person name="Celniker S.E."/>
            <person name="Holt R.A."/>
            <person name="Evans C.A."/>
            <person name="Gocayne J.D."/>
            <person name="Amanatides P.G."/>
            <person name="Scherer S.E."/>
            <person name="Li P.W."/>
            <person name="Hoskins R.A."/>
            <person name="Galle R.F."/>
            <person name="George R.A."/>
            <person name="Lewis S.E."/>
            <person name="Richards S."/>
            <person name="Ashburner M."/>
            <person name="Henderson S.N."/>
            <person name="Sutton G.G."/>
            <person name="Wortman J.R."/>
            <person name="Yandell M.D."/>
            <person name="Zhang Q."/>
            <person name="Chen L.X."/>
            <person name="Brandon R.C."/>
            <person name="Rogers Y.-H.C."/>
            <person name="Blazej R.G."/>
            <person name="Champe M."/>
            <person name="Pfeiffer B.D."/>
            <person name="Wan K.H."/>
            <person name="Doyle C."/>
            <person name="Baxter E.G."/>
            <person name="Helt G."/>
            <person name="Nelson C.R."/>
            <person name="Miklos G.L.G."/>
            <person name="Abril J.F."/>
            <person name="Agbayani A."/>
            <person name="An H.-J."/>
            <person name="Andrews-Pfannkoch C."/>
            <person name="Baldwin D."/>
            <person name="Ballew R.M."/>
            <person name="Basu A."/>
            <person name="Baxendale J."/>
            <person name="Bayraktaroglu L."/>
            <person name="Beasley E.M."/>
            <person name="Beeson K.Y."/>
            <person name="Benos P.V."/>
            <person name="Berman B.P."/>
            <person name="Bhandari D."/>
            <person name="Bolshakov S."/>
            <person name="Borkova D."/>
            <person name="Botchan M.R."/>
            <person name="Bouck J."/>
            <person name="Brokstein P."/>
            <person name="Brottier P."/>
            <person name="Burtis K.C."/>
            <person name="Busam D.A."/>
            <person name="Butler H."/>
            <person name="Cadieu E."/>
            <person name="Center A."/>
            <person name="Chandra I."/>
            <person name="Cherry J.M."/>
            <person name="Cawley S."/>
            <person name="Dahlke C."/>
            <person name="Davenport L.B."/>
            <person name="Davies P."/>
            <person name="de Pablos B."/>
            <person name="Delcher A."/>
            <person name="Deng Z."/>
            <person name="Mays A.D."/>
            <person name="Dew I."/>
            <person name="Dietz S.M."/>
            <person name="Dodson K."/>
            <person name="Doup L.E."/>
            <person name="Downes M."/>
            <person name="Dugan-Rocha S."/>
            <person name="Dunkov B.C."/>
            <person name="Dunn P."/>
            <person name="Durbin K.J."/>
            <person name="Evangelista C.C."/>
            <person name="Ferraz C."/>
            <person name="Ferriera S."/>
            <person name="Fleischmann W."/>
            <person name="Fosler C."/>
            <person name="Gabrielian A.E."/>
            <person name="Garg N.S."/>
            <person name="Gelbart W.M."/>
            <person name="Glasser K."/>
            <person name="Glodek A."/>
            <person name="Gong F."/>
            <person name="Gorrell J.H."/>
            <person name="Gu Z."/>
            <person name="Guan P."/>
            <person name="Harris M."/>
            <person name="Harris N.L."/>
            <person name="Harvey D.A."/>
            <person name="Heiman T.J."/>
            <person name="Hernandez J.R."/>
            <person name="Houck J."/>
            <person name="Hostin D."/>
            <person name="Houston K.A."/>
            <person name="Howland T.J."/>
            <person name="Wei M.-H."/>
            <person name="Ibegwam C."/>
            <person name="Jalali M."/>
            <person name="Kalush F."/>
            <person name="Karpen G.H."/>
            <person name="Ke Z."/>
            <person name="Kennison J.A."/>
            <person name="Ketchum K.A."/>
            <person name="Kimmel B.E."/>
            <person name="Kodira C.D."/>
            <person name="Kraft C.L."/>
            <person name="Kravitz S."/>
            <person name="Kulp D."/>
            <person name="Lai Z."/>
            <person name="Lasko P."/>
            <person name="Lei Y."/>
            <person name="Levitsky A.A."/>
            <person name="Li J.H."/>
            <person name="Li Z."/>
            <person name="Liang Y."/>
            <person name="Lin X."/>
            <person name="Liu X."/>
            <person name="Mattei B."/>
            <person name="McIntosh T.C."/>
            <person name="McLeod M.P."/>
            <person name="McPherson D."/>
            <person name="Merkulov G."/>
            <person name="Milshina N.V."/>
            <person name="Mobarry C."/>
            <person name="Morris J."/>
            <person name="Moshrefi A."/>
            <person name="Mount S.M."/>
            <person name="Moy M."/>
            <person name="Murphy B."/>
            <person name="Murphy L."/>
            <person name="Muzny D.M."/>
            <person name="Nelson D.L."/>
            <person name="Nelson D.R."/>
            <person name="Nelson K.A."/>
            <person name="Nixon K."/>
            <person name="Nusskern D.R."/>
            <person name="Pacleb J.M."/>
            <person name="Palazzolo M."/>
            <person name="Pittman G.S."/>
            <person name="Pan S."/>
            <person name="Pollard J."/>
            <person name="Puri V."/>
            <person name="Reese M.G."/>
            <person name="Reinert K."/>
            <person name="Remington K."/>
            <person name="Saunders R.D.C."/>
            <person name="Scheeler F."/>
            <person name="Shen H."/>
            <person name="Shue B.C."/>
            <person name="Siden-Kiamos I."/>
            <person name="Simpson M."/>
            <person name="Skupski M.P."/>
            <person name="Smith T.J."/>
            <person name="Spier E."/>
            <person name="Spradling A.C."/>
            <person name="Stapleton M."/>
            <person name="Strong R."/>
            <person name="Sun E."/>
            <person name="Svirskas R."/>
            <person name="Tector C."/>
            <person name="Turner R."/>
            <person name="Venter E."/>
            <person name="Wang A.H."/>
            <person name="Wang X."/>
            <person name="Wang Z.-Y."/>
            <person name="Wassarman D.A."/>
            <person name="Weinstock G.M."/>
            <person name="Weissenbach J."/>
            <person name="Williams S.M."/>
            <person name="Woodage T."/>
            <person name="Worley K.C."/>
            <person name="Wu D."/>
            <person name="Yang S."/>
            <person name="Yao Q.A."/>
            <person name="Ye J."/>
            <person name="Yeh R.-F."/>
            <person name="Zaveri J.S."/>
            <person name="Zhan M."/>
            <person name="Zhang G."/>
            <person name="Zhao Q."/>
            <person name="Zheng L."/>
            <person name="Zheng X.H."/>
            <person name="Zhong F.N."/>
            <person name="Zhong W."/>
            <person name="Zhou X."/>
            <person name="Zhu S.C."/>
            <person name="Zhu X."/>
            <person name="Smith H.O."/>
            <person name="Gibbs R.A."/>
            <person name="Myers E.W."/>
            <person name="Rubin G.M."/>
            <person name="Venter J.C."/>
        </authorList>
    </citation>
    <scope>NUCLEOTIDE SEQUENCE [LARGE SCALE GENOMIC DNA]</scope>
    <source>
        <strain>Berkeley</strain>
    </source>
</reference>
<reference key="2">
    <citation type="journal article" date="2002" name="Genome Biol.">
        <title>Annotation of the Drosophila melanogaster euchromatic genome: a systematic review.</title>
        <authorList>
            <person name="Misra S."/>
            <person name="Crosby M.A."/>
            <person name="Mungall C.J."/>
            <person name="Matthews B.B."/>
            <person name="Campbell K.S."/>
            <person name="Hradecky P."/>
            <person name="Huang Y."/>
            <person name="Kaminker J.S."/>
            <person name="Millburn G.H."/>
            <person name="Prochnik S.E."/>
            <person name="Smith C.D."/>
            <person name="Tupy J.L."/>
            <person name="Whitfield E.J."/>
            <person name="Bayraktaroglu L."/>
            <person name="Berman B.P."/>
            <person name="Bettencourt B.R."/>
            <person name="Celniker S.E."/>
            <person name="de Grey A.D.N.J."/>
            <person name="Drysdale R.A."/>
            <person name="Harris N.L."/>
            <person name="Richter J."/>
            <person name="Russo S."/>
            <person name="Schroeder A.J."/>
            <person name="Shu S.Q."/>
            <person name="Stapleton M."/>
            <person name="Yamada C."/>
            <person name="Ashburner M."/>
            <person name="Gelbart W.M."/>
            <person name="Rubin G.M."/>
            <person name="Lewis S.E."/>
        </authorList>
    </citation>
    <scope>GENOME REANNOTATION</scope>
    <source>
        <strain>Berkeley</strain>
    </source>
</reference>
<reference key="3">
    <citation type="journal article" date="2002" name="Genome Biol.">
        <title>A Drosophila full-length cDNA resource.</title>
        <authorList>
            <person name="Stapleton M."/>
            <person name="Carlson J.W."/>
            <person name="Brokstein P."/>
            <person name="Yu C."/>
            <person name="Champe M."/>
            <person name="George R.A."/>
            <person name="Guarin H."/>
            <person name="Kronmiller B."/>
            <person name="Pacleb J.M."/>
            <person name="Park S."/>
            <person name="Wan K.H."/>
            <person name="Rubin G.M."/>
            <person name="Celniker S.E."/>
        </authorList>
    </citation>
    <scope>NUCLEOTIDE SEQUENCE [LARGE SCALE MRNA]</scope>
    <source>
        <strain>Berkeley</strain>
        <tissue>Embryo</tissue>
    </source>
</reference>
<reference key="4">
    <citation type="journal article" date="2002" name="Mol. Cell. Biol.">
        <title>The SIN3/RPD3 deacetylase complex is essential for G(2) phase cell cycle progression and regulation of SMRTER corepressor levels.</title>
        <authorList>
            <person name="Pile L.A."/>
            <person name="Schlag E.M."/>
            <person name="Wassarman D.A."/>
        </authorList>
    </citation>
    <scope>FUNCTION</scope>
    <scope>SUBUNIT</scope>
    <scope>DISRUPTION PHENOTYPE</scope>
</reference>
<reference key="5">
    <citation type="journal article" date="2008" name="J. Proteome Res.">
        <title>Phosphoproteome analysis of Drosophila melanogaster embryos.</title>
        <authorList>
            <person name="Zhai B."/>
            <person name="Villen J."/>
            <person name="Beausoleil S.A."/>
            <person name="Mintseris J."/>
            <person name="Gygi S.P."/>
        </authorList>
    </citation>
    <scope>PHOSPHORYLATION [LARGE SCALE ANALYSIS] AT SER-84; SER-88; THR-91 AND THR-93</scope>
    <scope>IDENTIFICATION BY MASS SPECTROMETRY</scope>
    <source>
        <tissue>Embryo</tissue>
    </source>
</reference>
<name>SAP30_DROME</name>
<keyword id="KW-0238">DNA-binding</keyword>
<keyword id="KW-0479">Metal-binding</keyword>
<keyword id="KW-0539">Nucleus</keyword>
<keyword id="KW-0597">Phosphoprotein</keyword>
<keyword id="KW-1185">Reference proteome</keyword>
<keyword id="KW-0678">Repressor</keyword>
<keyword id="KW-0804">Transcription</keyword>
<keyword id="KW-0805">Transcription regulation</keyword>
<keyword id="KW-0862">Zinc</keyword>
<keyword id="KW-0863">Zinc-finger</keyword>
<feature type="chain" id="PRO_0000309508" description="Histone deacetylase complex subunit SAP30 homolog">
    <location>
        <begin position="1"/>
        <end position="173"/>
    </location>
</feature>
<feature type="zinc finger region" description="Atypical">
    <location>
        <begin position="20"/>
        <end position="68"/>
    </location>
</feature>
<feature type="region of interest" description="Disordered" evidence="2">
    <location>
        <begin position="73"/>
        <end position="94"/>
    </location>
</feature>
<feature type="modified residue" description="Phosphoserine" evidence="4">
    <location>
        <position position="84"/>
    </location>
</feature>
<feature type="modified residue" description="Phosphoserine" evidence="4">
    <location>
        <position position="88"/>
    </location>
</feature>
<feature type="modified residue" description="Phosphothreonine" evidence="4">
    <location>
        <position position="91"/>
    </location>
</feature>
<feature type="modified residue" description="Phosphothreonine" evidence="4">
    <location>
        <position position="93"/>
    </location>
</feature>